<evidence type="ECO:0000255" key="1">
    <source>
        <dbReference type="HAMAP-Rule" id="MF_01128"/>
    </source>
</evidence>
<sequence length="468" mass="50520">MSTRETFKISLLAKMPKDVINQFLSKDKTPFSVLFLSLLVGILAGLVGTYFEQAVHLVSETRTDWLKSEIGSFLPLWLAAFLISAFLAFIGYFLVHRFAPEAAGSGIPEIEGAMDGMRPVRWWRVLPVKFFGGMGALGSGMVLGREGPTVQMGGAVGRMISDIFRVKNEDTRHSLLAAGAAGGLAAAFNAPLAGIMFVIEEMRPQFRYTLISVRAVIISAVAANIVFRVINGQDAVITMPQYDAPELSTLGLFLLLGALFGVFGVLFNYLITLAQDLFVKFHRNDRKRYLLTGSMIGGCFGLLLLYVPELTGGGISLIPTITNGGYGAGILLLLFVGRIFTTLLCFGSGAPGGIFAPMLALGTLFGYAFGLIAKMWFPELNIEPGMFAIAGMGALFAATVRAPITGILLVIEMTNNYHLILPLIITSLGAVIFAQLLGGQPIYSQLLHRTLKNQKLQQQDLPPQSPNS</sequence>
<dbReference type="EMBL" id="CP001234">
    <property type="protein sequence ID" value="ACP07448.1"/>
    <property type="molecule type" value="Genomic_DNA"/>
</dbReference>
<dbReference type="RefSeq" id="WP_000107451.1">
    <property type="nucleotide sequence ID" value="NC_012580.1"/>
</dbReference>
<dbReference type="SMR" id="C3LVE3"/>
<dbReference type="KEGG" id="vcm:VCM66_A0485"/>
<dbReference type="HOGENOM" id="CLU_015263_7_0_6"/>
<dbReference type="Proteomes" id="UP000001217">
    <property type="component" value="Chromosome II"/>
</dbReference>
<dbReference type="GO" id="GO:0005886">
    <property type="term" value="C:plasma membrane"/>
    <property type="evidence" value="ECO:0007669"/>
    <property type="project" value="UniProtKB-SubCell"/>
</dbReference>
<dbReference type="GO" id="GO:0015297">
    <property type="term" value="F:antiporter activity"/>
    <property type="evidence" value="ECO:0007669"/>
    <property type="project" value="UniProtKB-UniRule"/>
</dbReference>
<dbReference type="GO" id="GO:0005247">
    <property type="term" value="F:voltage-gated chloride channel activity"/>
    <property type="evidence" value="ECO:0007669"/>
    <property type="project" value="TreeGrafter"/>
</dbReference>
<dbReference type="CDD" id="cd01031">
    <property type="entry name" value="EriC"/>
    <property type="match status" value="1"/>
</dbReference>
<dbReference type="Gene3D" id="1.10.3080.10">
    <property type="entry name" value="Clc chloride channel"/>
    <property type="match status" value="1"/>
</dbReference>
<dbReference type="HAMAP" id="MF_01128">
    <property type="entry name" value="CLC_ClcA"/>
    <property type="match status" value="1"/>
</dbReference>
<dbReference type="InterPro" id="IPR023861">
    <property type="entry name" value="Cl-channel_ClcA"/>
</dbReference>
<dbReference type="InterPro" id="IPR014743">
    <property type="entry name" value="Cl-channel_core"/>
</dbReference>
<dbReference type="InterPro" id="IPR001807">
    <property type="entry name" value="ClC"/>
</dbReference>
<dbReference type="NCBIfam" id="NF003640">
    <property type="entry name" value="PRK05277.1"/>
    <property type="match status" value="1"/>
</dbReference>
<dbReference type="PANTHER" id="PTHR45711">
    <property type="entry name" value="CHLORIDE CHANNEL PROTEIN"/>
    <property type="match status" value="1"/>
</dbReference>
<dbReference type="PANTHER" id="PTHR45711:SF6">
    <property type="entry name" value="CHLORIDE CHANNEL PROTEIN"/>
    <property type="match status" value="1"/>
</dbReference>
<dbReference type="Pfam" id="PF00654">
    <property type="entry name" value="Voltage_CLC"/>
    <property type="match status" value="1"/>
</dbReference>
<dbReference type="PRINTS" id="PR00762">
    <property type="entry name" value="CLCHANNEL"/>
</dbReference>
<dbReference type="SUPFAM" id="SSF81340">
    <property type="entry name" value="Clc chloride channel"/>
    <property type="match status" value="1"/>
</dbReference>
<reference key="1">
    <citation type="journal article" date="2008" name="PLoS ONE">
        <title>A recalibrated molecular clock and independent origins for the cholera pandemic clones.</title>
        <authorList>
            <person name="Feng L."/>
            <person name="Reeves P.R."/>
            <person name="Lan R."/>
            <person name="Ren Y."/>
            <person name="Gao C."/>
            <person name="Zhou Z."/>
            <person name="Ren Y."/>
            <person name="Cheng J."/>
            <person name="Wang W."/>
            <person name="Wang J."/>
            <person name="Qian W."/>
            <person name="Li D."/>
            <person name="Wang L."/>
        </authorList>
    </citation>
    <scope>NUCLEOTIDE SEQUENCE [LARGE SCALE GENOMIC DNA]</scope>
    <source>
        <strain>M66-2</strain>
    </source>
</reference>
<accession>C3LVE3</accession>
<keyword id="KW-0050">Antiport</keyword>
<keyword id="KW-0997">Cell inner membrane</keyword>
<keyword id="KW-1003">Cell membrane</keyword>
<keyword id="KW-0868">Chloride</keyword>
<keyword id="KW-0406">Ion transport</keyword>
<keyword id="KW-0472">Membrane</keyword>
<keyword id="KW-0812">Transmembrane</keyword>
<keyword id="KW-1133">Transmembrane helix</keyword>
<keyword id="KW-0813">Transport</keyword>
<comment type="function">
    <text evidence="1">Proton-coupled chloride transporter. Functions as antiport system and exchanges two chloride ions for 1 proton. Probably acts as an electrical shunt for an outwardly-directed proton pump that is linked to amino acid decarboxylation, as part of the extreme acid resistance (XAR) response.</text>
</comment>
<comment type="catalytic activity">
    <reaction evidence="1">
        <text>2 chloride(in) + H(+)(out) = 2 chloride(out) + H(+)(in)</text>
        <dbReference type="Rhea" id="RHEA:29567"/>
        <dbReference type="ChEBI" id="CHEBI:15378"/>
        <dbReference type="ChEBI" id="CHEBI:17996"/>
    </reaction>
</comment>
<comment type="subunit">
    <text evidence="1">Homodimer.</text>
</comment>
<comment type="subcellular location">
    <subcellularLocation>
        <location evidence="1">Cell inner membrane</location>
        <topology evidence="1">Multi-pass membrane protein</topology>
    </subcellularLocation>
</comment>
<comment type="similarity">
    <text evidence="1">Belongs to the chloride channel (TC 2.A.49) family. ClcA subfamily.</text>
</comment>
<organism>
    <name type="scientific">Vibrio cholerae serotype O1 (strain M66-2)</name>
    <dbReference type="NCBI Taxonomy" id="579112"/>
    <lineage>
        <taxon>Bacteria</taxon>
        <taxon>Pseudomonadati</taxon>
        <taxon>Pseudomonadota</taxon>
        <taxon>Gammaproteobacteria</taxon>
        <taxon>Vibrionales</taxon>
        <taxon>Vibrionaceae</taxon>
        <taxon>Vibrio</taxon>
    </lineage>
</organism>
<gene>
    <name evidence="1" type="primary">clcA</name>
    <name type="ordered locus">VCM66_A0485</name>
</gene>
<proteinExistence type="inferred from homology"/>
<name>CLCA_VIBCM</name>
<feature type="chain" id="PRO_1000164073" description="H(+)/Cl(-) exchange transporter ClcA">
    <location>
        <begin position="1"/>
        <end position="468"/>
    </location>
</feature>
<feature type="topological domain" description="Cytoplasmic" evidence="1">
    <location>
        <begin position="1"/>
        <end position="30"/>
    </location>
</feature>
<feature type="transmembrane region" description="Helical" evidence="1">
    <location>
        <begin position="31"/>
        <end position="67"/>
    </location>
</feature>
<feature type="topological domain" description="Periplasmic" evidence="1">
    <location>
        <begin position="68"/>
        <end position="74"/>
    </location>
</feature>
<feature type="transmembrane region" description="Helical" evidence="1">
    <location>
        <begin position="75"/>
        <end position="98"/>
    </location>
</feature>
<feature type="intramembrane region" description="Helical" evidence="1">
    <location>
        <begin position="107"/>
        <end position="114"/>
    </location>
</feature>
<feature type="topological domain" description="Cytoplasmic" evidence="1">
    <location>
        <begin position="115"/>
        <end position="121"/>
    </location>
</feature>
<feature type="transmembrane region" description="Helical" evidence="1">
    <location>
        <begin position="122"/>
        <end position="139"/>
    </location>
</feature>
<feature type="transmembrane region" description="Helical" evidence="1">
    <location>
        <begin position="146"/>
        <end position="164"/>
    </location>
</feature>
<feature type="topological domain" description="Cytoplasmic" evidence="1">
    <location>
        <begin position="165"/>
        <end position="174"/>
    </location>
</feature>
<feature type="intramembrane region" description="Helical" evidence="1">
    <location>
        <begin position="175"/>
        <end position="187"/>
    </location>
</feature>
<feature type="intramembrane region" description="Helical" evidence="1">
    <location>
        <begin position="191"/>
        <end position="199"/>
    </location>
</feature>
<feature type="topological domain" description="Cytoplasmic" evidence="1">
    <location>
        <begin position="200"/>
        <end position="212"/>
    </location>
</feature>
<feature type="transmembrane region" description="Helical" evidence="1">
    <location>
        <begin position="213"/>
        <end position="230"/>
    </location>
</feature>
<feature type="topological domain" description="Periplasmic" evidence="1">
    <location>
        <begin position="231"/>
        <end position="250"/>
    </location>
</feature>
<feature type="transmembrane region" description="Helical" evidence="1">
    <location>
        <begin position="251"/>
        <end position="279"/>
    </location>
</feature>
<feature type="topological domain" description="Cytoplasmic" evidence="1">
    <location>
        <begin position="280"/>
        <end position="285"/>
    </location>
</feature>
<feature type="transmembrane region" description="Helical" evidence="1">
    <location>
        <begin position="286"/>
        <end position="307"/>
    </location>
</feature>
<feature type="topological domain" description="Periplasmic" evidence="1">
    <location>
        <begin position="308"/>
        <end position="327"/>
    </location>
</feature>
<feature type="transmembrane region" description="Helical" evidence="1">
    <location>
        <begin position="328"/>
        <end position="347"/>
    </location>
</feature>
<feature type="transmembrane region" description="Helical" evidence="1">
    <location>
        <begin position="353"/>
        <end position="374"/>
    </location>
</feature>
<feature type="topological domain" description="Periplasmic" evidence="1">
    <location>
        <begin position="375"/>
        <end position="384"/>
    </location>
</feature>
<feature type="intramembrane region" description="Helical" evidence="1">
    <location>
        <begin position="385"/>
        <end position="399"/>
    </location>
</feature>
<feature type="intramembrane region" description="Note=Loop between two helices" evidence="1">
    <location>
        <begin position="400"/>
        <end position="402"/>
    </location>
</feature>
<feature type="intramembrane region" description="Helical" evidence="1">
    <location>
        <begin position="403"/>
        <end position="414"/>
    </location>
</feature>
<feature type="intramembrane region" description="Note=Loop between two helices" evidence="1">
    <location>
        <begin position="415"/>
        <end position="419"/>
    </location>
</feature>
<feature type="transmembrane region" description="Helical" evidence="1">
    <location>
        <begin position="420"/>
        <end position="436"/>
    </location>
</feature>
<feature type="topological domain" description="Cytoplasmic" evidence="1">
    <location>
        <begin position="437"/>
        <end position="468"/>
    </location>
</feature>
<feature type="short sequence motif" description="Selectivity filter part_1" evidence="1">
    <location>
        <begin position="104"/>
        <end position="108"/>
    </location>
</feature>
<feature type="short sequence motif" description="Selectivity filter part_2" evidence="1">
    <location>
        <begin position="144"/>
        <end position="148"/>
    </location>
</feature>
<feature type="short sequence motif" description="Selectivity filter part_3" evidence="1">
    <location>
        <begin position="353"/>
        <end position="357"/>
    </location>
</feature>
<feature type="binding site" evidence="1">
    <location>
        <position position="105"/>
    </location>
    <ligand>
        <name>chloride</name>
        <dbReference type="ChEBI" id="CHEBI:17996"/>
    </ligand>
</feature>
<feature type="binding site" evidence="1">
    <location>
        <position position="354"/>
    </location>
    <ligand>
        <name>chloride</name>
        <dbReference type="ChEBI" id="CHEBI:17996"/>
    </ligand>
</feature>
<feature type="binding site" evidence="1">
    <location>
        <position position="355"/>
    </location>
    <ligand>
        <name>chloride</name>
        <dbReference type="ChEBI" id="CHEBI:17996"/>
    </ligand>
</feature>
<feature type="binding site" evidence="1">
    <location>
        <position position="443"/>
    </location>
    <ligand>
        <name>chloride</name>
        <dbReference type="ChEBI" id="CHEBI:17996"/>
    </ligand>
</feature>
<feature type="site" description="Mediates proton transfer from the outer aqueous phase to the interior of the protein; involved in linking H(+) and Cl(-) transport" evidence="1">
    <location>
        <position position="146"/>
    </location>
</feature>
<feature type="site" description="Mediates proton transfer from the protein to the inner aqueous phase" evidence="1">
    <location>
        <position position="201"/>
    </location>
</feature>
<protein>
    <recommendedName>
        <fullName evidence="1">H(+)/Cl(-) exchange transporter ClcA</fullName>
    </recommendedName>
</protein>